<dbReference type="EMBL" id="KP216860">
    <property type="protein sequence ID" value="AKB91383.1"/>
    <property type="molecule type" value="mRNA"/>
</dbReference>
<dbReference type="PDB" id="6PPC">
    <property type="method" value="NMR"/>
    <property type="chains" value="A=36-68"/>
</dbReference>
<dbReference type="PDBsum" id="6PPC"/>
<dbReference type="BMRB" id="A0A0E3SVE7"/>
<dbReference type="SMR" id="A0A0E3SVE7"/>
<dbReference type="GO" id="GO:0005576">
    <property type="term" value="C:extracellular region"/>
    <property type="evidence" value="ECO:0007669"/>
    <property type="project" value="UniProtKB-SubCell"/>
</dbReference>
<feature type="signal peptide" evidence="5">
    <location>
        <begin position="1"/>
        <end position="29"/>
    </location>
</feature>
<feature type="propeptide" id="PRO_0000444689" evidence="5">
    <location>
        <begin position="30"/>
        <end position="35"/>
    </location>
</feature>
<feature type="chain" id="PRO_5002412259" description="Conotoxin phi-MiXXVIIA" evidence="5">
    <location>
        <begin position="36"/>
        <end position="68"/>
    </location>
</feature>
<feature type="disulfide bond" evidence="1 7">
    <location>
        <begin position="38"/>
        <end position="49"/>
    </location>
</feature>
<feature type="disulfide bond" evidence="1 7">
    <location>
        <begin position="42"/>
        <end position="51"/>
    </location>
</feature>
<feature type="disulfide bond" evidence="1 7">
    <location>
        <begin position="45"/>
        <end position="56"/>
    </location>
</feature>
<feature type="disulfide bond" evidence="1 7">
    <location>
        <begin position="50"/>
        <end position="61"/>
    </location>
</feature>
<feature type="strand" evidence="8">
    <location>
        <begin position="54"/>
        <end position="57"/>
    </location>
</feature>
<feature type="strand" evidence="8">
    <location>
        <begin position="60"/>
        <end position="62"/>
    </location>
</feature>
<protein>
    <recommendedName>
        <fullName evidence="3">Conotoxin phi-MiXXVIIA</fullName>
    </recommendedName>
    <alternativeName>
        <fullName evidence="2">Conopeptide Mi045</fullName>
    </alternativeName>
</protein>
<name>CG2RA_CONMI</name>
<evidence type="ECO:0000269" key="1">
    <source>
    </source>
</evidence>
<evidence type="ECO:0000303" key="2">
    <source>
    </source>
</evidence>
<evidence type="ECO:0000303" key="3">
    <source>
    </source>
</evidence>
<evidence type="ECO:0000305" key="4"/>
<evidence type="ECO:0000305" key="5">
    <source>
    </source>
</evidence>
<evidence type="ECO:0000305" key="6">
    <source>
    </source>
</evidence>
<evidence type="ECO:0007744" key="7">
    <source>
        <dbReference type="PDB" id="6PPC"/>
    </source>
</evidence>
<evidence type="ECO:0007829" key="8">
    <source>
        <dbReference type="PDB" id="6PPC"/>
    </source>
</evidence>
<reference key="1">
    <citation type="journal article" date="2013" name="Mol. Cell. Proteomics">
        <title>Transcriptomic messiness in the venom duct of Conus miles contributes to conotoxin diversity.</title>
        <authorList>
            <person name="Jin A.H."/>
            <person name="Dutertre S."/>
            <person name="Kaas Q."/>
            <person name="Lavergne V."/>
            <person name="Kubala P."/>
            <person name="Lewis R.J."/>
            <person name="Alewood P.F."/>
        </authorList>
    </citation>
    <scope>NUCLEOTIDE SEQUENCE [MRNA]</scope>
    <scope>IDENTIFICATION BY MASS SPECTROMETRY</scope>
    <source>
        <tissue>Venom duct</tissue>
    </source>
</reference>
<reference key="2">
    <citation type="journal article" date="2017" name="Angew. Chem. Int. Ed.">
        <title>Conotoxin Phi-MiXXVIIA from the superfamily G2 employs a novel cysteine framework that mimics granulin and displays anti-apoptotic activity.</title>
        <authorList>
            <person name="Jin A.H."/>
            <person name="Dekan Z."/>
            <person name="Smout M.J."/>
            <person name="Wilson D."/>
            <person name="Dutertre S."/>
            <person name="Vetter I."/>
            <person name="Lewis R.J."/>
            <person name="Loukas A."/>
            <person name="Daly N.L."/>
            <person name="Alewood P.F."/>
        </authorList>
    </citation>
    <scope>STRUCTURE BY NMR OF 36-68</scope>
    <scope>FUNCTION</scope>
    <scope>SYNTHESIS OF 36-68</scope>
    <scope>DISULFIDE BOND</scope>
</reference>
<comment type="function">
    <text evidence="1">This peptide promotes cell proliferation (EC(50)=17.85 uM) and inhibits apoptosis (EC(50)=2.2 uM).</text>
</comment>
<comment type="subcellular location">
    <subcellularLocation>
        <location evidence="1">Secreted</location>
    </subcellularLocation>
</comment>
<comment type="tissue specificity">
    <text evidence="6">Expressed by the venom duct.</text>
</comment>
<comment type="domain">
    <text evidence="4">The cysteine framework is XXVII (C-C-C-CCC-C-C).</text>
</comment>
<comment type="domain">
    <text evidence="6">Displays a mini-granulin fold, a structure composed of two short, stacked beta-hairpins connected by two parallel disulfide bonds. This newly described fold is derived from the same cysteine connectivity as knottins (ICK fold). The name 'mini-granulin fold' comes from the structural homology with the N-terminal region of the human granulin.</text>
</comment>
<comment type="miscellaneous">
    <text evidence="1">Negative results: does not show activities on voltage-gated sodium (Nav) and calcium (Cav) channels as well as on nicotinic acetylcholine receptors (nAChRs) (at concentrations up to 100 uM).</text>
</comment>
<comment type="similarity">
    <text evidence="4">Belongs to the conotoxin G2 superfamily. 1 family.</text>
</comment>
<accession>A0A0E3SVE7</accession>
<proteinExistence type="evidence at protein level"/>
<keyword id="KW-0002">3D-structure</keyword>
<keyword id="KW-1015">Disulfide bond</keyword>
<keyword id="KW-0964">Secreted</keyword>
<keyword id="KW-0732">Signal</keyword>
<sequence>MRFFFLLLTVALFLTSITGDDAERMLGMKEGGYVREDCGSDCMPCGGECCCEPNSCIDGTCHHESSPN</sequence>
<organism>
    <name type="scientific">Conus miles</name>
    <name type="common">Soldier cone</name>
    <name type="synonym">Mile cone</name>
    <dbReference type="NCBI Taxonomy" id="69564"/>
    <lineage>
        <taxon>Eukaryota</taxon>
        <taxon>Metazoa</taxon>
        <taxon>Spiralia</taxon>
        <taxon>Lophotrochozoa</taxon>
        <taxon>Mollusca</taxon>
        <taxon>Gastropoda</taxon>
        <taxon>Caenogastropoda</taxon>
        <taxon>Neogastropoda</taxon>
        <taxon>Conoidea</taxon>
        <taxon>Conidae</taxon>
        <taxon>Conus</taxon>
        <taxon>Rhizoconus</taxon>
    </lineage>
</organism>